<sequence>MGRILRGLAGEGDLRVVAAETTDVVEEARLRHGLSPTATAALGRAMTGALLLAQLLLKTPKERITLRVEGTGPLGGLVVEADAFGHVRGYVKNPRAEVPLREDGKLNVGELVGAGALRVDRSLPSGEVYTSTVPLVSGEIAEDLAHYLWQSEQIPSAVLLGVRVKGEGEVEVAGGVAVQVMPGAREEVLDRLEANLKDLPGLTPLLRERGLEGALEALLAGLGFERTDLRALGYFQNEIPARFRCRCNREKALEALVFFTPEEREDMIVKDGGAEVVCHWCGEVYRFSPEEVRSLVAEVRCPDCGTLWLYPKGDGTLARIEGETCRCGRKVELPSETRPQA</sequence>
<feature type="chain" id="PRO_0000238109" description="33 kDa chaperonin">
    <location>
        <begin position="1"/>
        <end position="341"/>
    </location>
</feature>
<feature type="disulfide bond" description="Redox-active" evidence="1">
    <location>
        <begin position="245"/>
        <end position="247"/>
    </location>
</feature>
<feature type="disulfide bond" description="Redox-active" evidence="1">
    <location>
        <begin position="278"/>
        <end position="281"/>
    </location>
</feature>
<gene>
    <name evidence="1" type="primary">hslO</name>
    <name type="ordered locus">TTHA0894</name>
</gene>
<comment type="function">
    <text evidence="1">Redox regulated molecular chaperone. Protects both thermally unfolding and oxidatively damaged proteins from irreversible aggregation. Plays an important role in the bacterial defense system toward oxidative stress.</text>
</comment>
<comment type="subcellular location">
    <subcellularLocation>
        <location evidence="1">Cytoplasm</location>
    </subcellularLocation>
</comment>
<comment type="PTM">
    <text evidence="1">Under oxidizing conditions two disulfide bonds are formed involving the reactive cysteines. Under reducing conditions zinc is bound to the reactive cysteines and the protein is inactive.</text>
</comment>
<comment type="similarity">
    <text evidence="1">Belongs to the HSP33 family.</text>
</comment>
<dbReference type="EMBL" id="AP008226">
    <property type="protein sequence ID" value="BAD70717.1"/>
    <property type="molecule type" value="Genomic_DNA"/>
</dbReference>
<dbReference type="RefSeq" id="WP_011228278.1">
    <property type="nucleotide sequence ID" value="NC_006461.1"/>
</dbReference>
<dbReference type="RefSeq" id="YP_144160.1">
    <property type="nucleotide sequence ID" value="NC_006461.1"/>
</dbReference>
<dbReference type="SMR" id="Q5SJV8"/>
<dbReference type="EnsemblBacteria" id="BAD70717">
    <property type="protein sequence ID" value="BAD70717"/>
    <property type="gene ID" value="BAD70717"/>
</dbReference>
<dbReference type="GeneID" id="3169889"/>
<dbReference type="KEGG" id="ttj:TTHA0894"/>
<dbReference type="PATRIC" id="fig|300852.9.peg.886"/>
<dbReference type="eggNOG" id="COG1281">
    <property type="taxonomic scope" value="Bacteria"/>
</dbReference>
<dbReference type="HOGENOM" id="CLU_054493_1_0_0"/>
<dbReference type="PhylomeDB" id="Q5SJV8"/>
<dbReference type="Proteomes" id="UP000000532">
    <property type="component" value="Chromosome"/>
</dbReference>
<dbReference type="GO" id="GO:0005737">
    <property type="term" value="C:cytoplasm"/>
    <property type="evidence" value="ECO:0007669"/>
    <property type="project" value="UniProtKB-SubCell"/>
</dbReference>
<dbReference type="GO" id="GO:0044183">
    <property type="term" value="F:protein folding chaperone"/>
    <property type="evidence" value="ECO:0007669"/>
    <property type="project" value="TreeGrafter"/>
</dbReference>
<dbReference type="GO" id="GO:0051082">
    <property type="term" value="F:unfolded protein binding"/>
    <property type="evidence" value="ECO:0007669"/>
    <property type="project" value="UniProtKB-UniRule"/>
</dbReference>
<dbReference type="GO" id="GO:0042026">
    <property type="term" value="P:protein refolding"/>
    <property type="evidence" value="ECO:0007669"/>
    <property type="project" value="TreeGrafter"/>
</dbReference>
<dbReference type="CDD" id="cd00498">
    <property type="entry name" value="Hsp33"/>
    <property type="match status" value="1"/>
</dbReference>
<dbReference type="Gene3D" id="3.55.30.10">
    <property type="entry name" value="Hsp33 domain"/>
    <property type="match status" value="1"/>
</dbReference>
<dbReference type="Gene3D" id="3.90.1280.10">
    <property type="entry name" value="HSP33 redox switch-like"/>
    <property type="match status" value="1"/>
</dbReference>
<dbReference type="HAMAP" id="MF_00117">
    <property type="entry name" value="HslO"/>
    <property type="match status" value="1"/>
</dbReference>
<dbReference type="InterPro" id="IPR000397">
    <property type="entry name" value="Heat_shock_Hsp33"/>
</dbReference>
<dbReference type="InterPro" id="IPR016154">
    <property type="entry name" value="Heat_shock_Hsp33_C"/>
</dbReference>
<dbReference type="InterPro" id="IPR016153">
    <property type="entry name" value="Heat_shock_Hsp33_N"/>
</dbReference>
<dbReference type="NCBIfam" id="NF001033">
    <property type="entry name" value="PRK00114.1"/>
    <property type="match status" value="1"/>
</dbReference>
<dbReference type="PANTHER" id="PTHR30111">
    <property type="entry name" value="33 KDA CHAPERONIN"/>
    <property type="match status" value="1"/>
</dbReference>
<dbReference type="PANTHER" id="PTHR30111:SF1">
    <property type="entry name" value="33 KDA CHAPERONIN"/>
    <property type="match status" value="1"/>
</dbReference>
<dbReference type="Pfam" id="PF01430">
    <property type="entry name" value="HSP33"/>
    <property type="match status" value="1"/>
</dbReference>
<dbReference type="PIRSF" id="PIRSF005261">
    <property type="entry name" value="Heat_shock_Hsp33"/>
    <property type="match status" value="1"/>
</dbReference>
<dbReference type="SUPFAM" id="SSF64397">
    <property type="entry name" value="Hsp33 domain"/>
    <property type="match status" value="1"/>
</dbReference>
<dbReference type="SUPFAM" id="SSF118352">
    <property type="entry name" value="HSP33 redox switch-like"/>
    <property type="match status" value="1"/>
</dbReference>
<evidence type="ECO:0000255" key="1">
    <source>
        <dbReference type="HAMAP-Rule" id="MF_00117"/>
    </source>
</evidence>
<reference key="1">
    <citation type="submission" date="2004-11" db="EMBL/GenBank/DDBJ databases">
        <title>Complete genome sequence of Thermus thermophilus HB8.</title>
        <authorList>
            <person name="Masui R."/>
            <person name="Kurokawa K."/>
            <person name="Nakagawa N."/>
            <person name="Tokunaga F."/>
            <person name="Koyama Y."/>
            <person name="Shibata T."/>
            <person name="Oshima T."/>
            <person name="Yokoyama S."/>
            <person name="Yasunaga T."/>
            <person name="Kuramitsu S."/>
        </authorList>
    </citation>
    <scope>NUCLEOTIDE SEQUENCE [LARGE SCALE GENOMIC DNA]</scope>
    <source>
        <strain>ATCC 27634 / DSM 579 / HB8</strain>
    </source>
</reference>
<protein>
    <recommendedName>
        <fullName evidence="1">33 kDa chaperonin</fullName>
    </recommendedName>
    <alternativeName>
        <fullName evidence="1">Heat shock protein 33 homolog</fullName>
        <shortName evidence="1">HSP33</shortName>
    </alternativeName>
</protein>
<proteinExistence type="inferred from homology"/>
<organism>
    <name type="scientific">Thermus thermophilus (strain ATCC 27634 / DSM 579 / HB8)</name>
    <dbReference type="NCBI Taxonomy" id="300852"/>
    <lineage>
        <taxon>Bacteria</taxon>
        <taxon>Thermotogati</taxon>
        <taxon>Deinococcota</taxon>
        <taxon>Deinococci</taxon>
        <taxon>Thermales</taxon>
        <taxon>Thermaceae</taxon>
        <taxon>Thermus</taxon>
    </lineage>
</organism>
<accession>Q5SJV8</accession>
<name>HSLO_THET8</name>
<keyword id="KW-0143">Chaperone</keyword>
<keyword id="KW-0963">Cytoplasm</keyword>
<keyword id="KW-1015">Disulfide bond</keyword>
<keyword id="KW-0676">Redox-active center</keyword>
<keyword id="KW-1185">Reference proteome</keyword>
<keyword id="KW-0862">Zinc</keyword>